<feature type="chain" id="PRO_0000451702" description="Alcohol acyltransferase 9">
    <location>
        <begin position="1"/>
        <end position="432"/>
    </location>
</feature>
<feature type="active site" description="Proton acceptor" evidence="1">
    <location>
        <position position="156"/>
    </location>
</feature>
<feature type="active site" description="Proton acceptor" evidence="1">
    <location>
        <position position="379"/>
    </location>
</feature>
<organism>
    <name type="scientific">Actinidia eriantha</name>
    <name type="common">Velvet vine</name>
    <name type="synonym">Actinidia fulvicoma var. lanata</name>
    <dbReference type="NCBI Taxonomy" id="165200"/>
    <lineage>
        <taxon>Eukaryota</taxon>
        <taxon>Viridiplantae</taxon>
        <taxon>Streptophyta</taxon>
        <taxon>Embryophyta</taxon>
        <taxon>Tracheophyta</taxon>
        <taxon>Spermatophyta</taxon>
        <taxon>Magnoliopsida</taxon>
        <taxon>eudicotyledons</taxon>
        <taxon>Gunneridae</taxon>
        <taxon>Pentapetalae</taxon>
        <taxon>asterids</taxon>
        <taxon>Ericales</taxon>
        <taxon>Actinidiaceae</taxon>
        <taxon>Actinidia</taxon>
    </lineage>
</organism>
<evidence type="ECO:0000250" key="1">
    <source>
        <dbReference type="UniProtKB" id="Q9FI78"/>
    </source>
</evidence>
<evidence type="ECO:0000269" key="2">
    <source>
    </source>
</evidence>
<evidence type="ECO:0000303" key="3">
    <source>
    </source>
</evidence>
<evidence type="ECO:0000305" key="4"/>
<accession>A0A068BIF1</accession>
<gene>
    <name evidence="3" type="primary">AT9</name>
</gene>
<comment type="function">
    <text evidence="2">Involved in the biosynthesis of volatile esters which confer kiwifruit flavor (PubMed:21450321). Alcohol acyl transferase that can use a wide range of alcohols as substrate to produce esters (PubMed:21450321). Exhibits acetyl-CoA:alcohol O-acyltransferase activity (PubMed:21450321).</text>
</comment>
<comment type="catalytic activity">
    <reaction evidence="2">
        <text>2-(methylsulfanyl)acetyl-CoA + butan-1-ol = butyl 2-(methylsulfanyl)acetate + CoA</text>
        <dbReference type="Rhea" id="RHEA:64672"/>
        <dbReference type="ChEBI" id="CHEBI:28885"/>
        <dbReference type="ChEBI" id="CHEBI:57287"/>
        <dbReference type="ChEBI" id="CHEBI:156076"/>
        <dbReference type="ChEBI" id="CHEBI:156077"/>
    </reaction>
    <physiologicalReaction direction="left-to-right" evidence="2">
        <dbReference type="Rhea" id="RHEA:64673"/>
    </physiologicalReaction>
</comment>
<comment type="catalytic activity">
    <reaction evidence="2">
        <text>ethanol + acetyl-CoA = ethyl acetate + CoA</text>
        <dbReference type="Rhea" id="RHEA:55972"/>
        <dbReference type="ChEBI" id="CHEBI:16236"/>
        <dbReference type="ChEBI" id="CHEBI:27750"/>
        <dbReference type="ChEBI" id="CHEBI:57287"/>
        <dbReference type="ChEBI" id="CHEBI:57288"/>
        <dbReference type="EC" id="2.3.1.268"/>
    </reaction>
    <physiologicalReaction direction="left-to-right" evidence="2">
        <dbReference type="Rhea" id="RHEA:55973"/>
    </physiologicalReaction>
</comment>
<comment type="catalytic activity">
    <reaction evidence="2">
        <text>butan-1-ol + acetyl-CoA = butyl acetate + CoA</text>
        <dbReference type="Rhea" id="RHEA:64632"/>
        <dbReference type="ChEBI" id="CHEBI:28885"/>
        <dbReference type="ChEBI" id="CHEBI:31328"/>
        <dbReference type="ChEBI" id="CHEBI:57287"/>
        <dbReference type="ChEBI" id="CHEBI:57288"/>
    </reaction>
    <physiologicalReaction direction="left-to-right" evidence="2">
        <dbReference type="Rhea" id="RHEA:64633"/>
    </physiologicalReaction>
</comment>
<comment type="catalytic activity">
    <reaction evidence="2">
        <text>butan-1-ol + propanoyl-CoA = butyl propanoate + CoA</text>
        <dbReference type="Rhea" id="RHEA:64644"/>
        <dbReference type="ChEBI" id="CHEBI:28885"/>
        <dbReference type="ChEBI" id="CHEBI:57287"/>
        <dbReference type="ChEBI" id="CHEBI:57392"/>
        <dbReference type="ChEBI" id="CHEBI:89831"/>
    </reaction>
    <physiologicalReaction direction="left-to-right" evidence="2">
        <dbReference type="Rhea" id="RHEA:64645"/>
    </physiologicalReaction>
</comment>
<comment type="tissue specificity">
    <text evidence="2">Expressed in fruit.</text>
</comment>
<comment type="developmental stage">
    <text evidence="2">Accumulates in kiwifruit during ripening.</text>
</comment>
<comment type="induction">
    <text evidence="2">Induced by ethylene in ripe fruits.</text>
</comment>
<comment type="similarity">
    <text evidence="4">Belongs to the plant acyltransferase family.</text>
</comment>
<reference key="1">
    <citation type="journal article" date="2011" name="Phytochemistry">
        <title>Characterisation of two alcohol acyltransferases from kiwifruit (Actinidia spp.) reveals distinct substrate preferences.</title>
        <authorList>
            <person name="Guenther C.S."/>
            <person name="Chervin C."/>
            <person name="Marsh K.B."/>
            <person name="Newcomb R.D."/>
            <person name="Souleyre E.J.F."/>
        </authorList>
    </citation>
    <scope>NUCLEOTIDE SEQUENCE [MRNA]</scope>
    <scope>FUNCTION</scope>
    <scope>CATALYTIC ACTIVITY</scope>
    <scope>TISSUE SPECIFICITY</scope>
    <scope>DEVELOPMENTAL STAGE</scope>
    <scope>INDUCTION BY ETHYLENE</scope>
</reference>
<protein>
    <recommendedName>
        <fullName evidence="3">Alcohol acyltransferase 9</fullName>
        <shortName evidence="3">AeAT9</shortName>
        <ecNumber evidence="2">2.3.1.268</ecNumber>
    </recommendedName>
</protein>
<dbReference type="EC" id="2.3.1.268" evidence="2"/>
<dbReference type="EMBL" id="KJ626344">
    <property type="protein sequence ID" value="AIC83789.1"/>
    <property type="molecule type" value="mRNA"/>
</dbReference>
<dbReference type="SMR" id="A0A068BIF1"/>
<dbReference type="BioCyc" id="MetaCyc:MONOMER-16564"/>
<dbReference type="GO" id="GO:0016746">
    <property type="term" value="F:acyltransferase activity"/>
    <property type="evidence" value="ECO:0000314"/>
    <property type="project" value="UniProtKB"/>
</dbReference>
<dbReference type="GO" id="GO:0006066">
    <property type="term" value="P:alcohol metabolic process"/>
    <property type="evidence" value="ECO:0000314"/>
    <property type="project" value="UniProtKB"/>
</dbReference>
<dbReference type="GO" id="GO:0009836">
    <property type="term" value="P:fruit ripening, climacteric"/>
    <property type="evidence" value="ECO:0000270"/>
    <property type="project" value="UniProtKB"/>
</dbReference>
<dbReference type="GO" id="GO:0009723">
    <property type="term" value="P:response to ethylene"/>
    <property type="evidence" value="ECO:0000270"/>
    <property type="project" value="UniProtKB"/>
</dbReference>
<dbReference type="Gene3D" id="3.30.559.10">
    <property type="entry name" value="Chloramphenicol acetyltransferase-like domain"/>
    <property type="match status" value="2"/>
</dbReference>
<dbReference type="InterPro" id="IPR023213">
    <property type="entry name" value="CAT-like_dom_sf"/>
</dbReference>
<dbReference type="InterPro" id="IPR050898">
    <property type="entry name" value="Plant_acyltransferase"/>
</dbReference>
<dbReference type="PANTHER" id="PTHR31147">
    <property type="entry name" value="ACYL TRANSFERASE 4"/>
    <property type="match status" value="1"/>
</dbReference>
<dbReference type="PANTHER" id="PTHR31147:SF1">
    <property type="entry name" value="ACYL TRANSFERASE 4"/>
    <property type="match status" value="1"/>
</dbReference>
<dbReference type="Pfam" id="PF02458">
    <property type="entry name" value="Transferase"/>
    <property type="match status" value="1"/>
</dbReference>
<sequence length="432" mass="47661">MASSVRLVKKPVLVAPVDPTPSTVLSLSSLDSQLFLRFPIEYLLVYASPHGVDRAVTAARVKAALARSLVPYYPLAGRVKTRPDSTGLDVVCQAQGAGLLEAVSDYTASDFQRAPRSVTEWRKLLLVEVFKVVPPLVVQLTWLSDGCVALGVGFSHCVIDGIGSSEFLNLFAELATGRARLSEFQPKPVWDRHLLNSAGRTNLGTHPEFGRVPDLSGFVTRFTQERLSPTSITFDKTWLKELKNIAMSTSQPGEFPYTSFEVLSGHIWRSWARSLNLPAKQVLKLLFSINIRNRVKPSLPAGYYGNAFVLGCAQTSVKDLTEKGLGYCADLVRGAKERVGDEYAREVVESVSWPRRASPDSVGVLIISQWSRLGLDRVDFGLGRPVQVGPICCDRYCLFLPVRESTESVKVMVAVPTSAVDRYEYFIRSPYS</sequence>
<proteinExistence type="evidence at protein level"/>
<keyword id="KW-0012">Acyltransferase</keyword>
<keyword id="KW-0808">Transferase</keyword>
<name>AT9_ACTER</name>